<dbReference type="EMBL" id="BT021031">
    <property type="protein sequence ID" value="AAX09048.1"/>
    <property type="molecule type" value="mRNA"/>
</dbReference>
<dbReference type="EMBL" id="BC103305">
    <property type="protein sequence ID" value="AAI03306.1"/>
    <property type="molecule type" value="mRNA"/>
</dbReference>
<dbReference type="RefSeq" id="NP_001014921.1">
    <molecule id="Q3ZBG6-2"/>
    <property type="nucleotide sequence ID" value="NM_001014921.1"/>
</dbReference>
<dbReference type="RefSeq" id="XP_005212372.1">
    <molecule id="Q3ZBG6-1"/>
    <property type="nucleotide sequence ID" value="XM_005212315.5"/>
</dbReference>
<dbReference type="FunCoup" id="Q3ZBG6">
    <property type="interactions" value="5156"/>
</dbReference>
<dbReference type="STRING" id="9913.ENSBTAP00000073817"/>
<dbReference type="PaxDb" id="9913-ENSBTAP00000019807"/>
<dbReference type="GeneID" id="513629"/>
<dbReference type="KEGG" id="bta:513629"/>
<dbReference type="CTD" id="25972"/>
<dbReference type="VEuPathDB" id="HostDB:ENSBTAG00000014877"/>
<dbReference type="eggNOG" id="KOG3012">
    <property type="taxonomic scope" value="Eukaryota"/>
</dbReference>
<dbReference type="HOGENOM" id="CLU_066239_0_0_1"/>
<dbReference type="InParanoid" id="Q3ZBG6"/>
<dbReference type="OMA" id="YRNFMYR"/>
<dbReference type="OrthoDB" id="10027013at2759"/>
<dbReference type="TreeFam" id="TF105624"/>
<dbReference type="Proteomes" id="UP000009136">
    <property type="component" value="Chromosome 11"/>
</dbReference>
<dbReference type="Bgee" id="ENSBTAG00000014877">
    <property type="expression patterns" value="Expressed in oocyte and 103 other cell types or tissues"/>
</dbReference>
<dbReference type="GO" id="GO:0000139">
    <property type="term" value="C:Golgi membrane"/>
    <property type="evidence" value="ECO:0000318"/>
    <property type="project" value="GO_Central"/>
</dbReference>
<dbReference type="GO" id="GO:0005637">
    <property type="term" value="C:nuclear inner membrane"/>
    <property type="evidence" value="ECO:0000250"/>
    <property type="project" value="UniProtKB"/>
</dbReference>
<dbReference type="GO" id="GO:0003723">
    <property type="term" value="F:RNA binding"/>
    <property type="evidence" value="ECO:0000250"/>
    <property type="project" value="UniProtKB"/>
</dbReference>
<dbReference type="GO" id="GO:0034394">
    <property type="term" value="P:protein localization to cell surface"/>
    <property type="evidence" value="ECO:0000250"/>
    <property type="project" value="UniProtKB"/>
</dbReference>
<dbReference type="InterPro" id="IPR007881">
    <property type="entry name" value="UNC-50"/>
</dbReference>
<dbReference type="PANTHER" id="PTHR12841">
    <property type="entry name" value="PROTEIN UNC-50 HOMOLOG"/>
    <property type="match status" value="1"/>
</dbReference>
<dbReference type="PANTHER" id="PTHR12841:SF6">
    <property type="entry name" value="PROTEIN UNC-50 HOMOLOG"/>
    <property type="match status" value="1"/>
</dbReference>
<dbReference type="Pfam" id="PF05216">
    <property type="entry name" value="UNC-50"/>
    <property type="match status" value="1"/>
</dbReference>
<evidence type="ECO:0000250" key="1">
    <source>
        <dbReference type="UniProtKB" id="O55227"/>
    </source>
</evidence>
<evidence type="ECO:0000250" key="2">
    <source>
        <dbReference type="UniProtKB" id="Q53HI1"/>
    </source>
</evidence>
<evidence type="ECO:0000255" key="3"/>
<evidence type="ECO:0000256" key="4">
    <source>
        <dbReference type="SAM" id="MobiDB-lite"/>
    </source>
</evidence>
<evidence type="ECO:0000303" key="5">
    <source>
    </source>
</evidence>
<evidence type="ECO:0000305" key="6"/>
<name>UNC50_BOVIN</name>
<reference key="1">
    <citation type="journal article" date="2005" name="BMC Genomics">
        <title>Characterization of 954 bovine full-CDS cDNA sequences.</title>
        <authorList>
            <person name="Harhay G.P."/>
            <person name="Sonstegard T.S."/>
            <person name="Keele J.W."/>
            <person name="Heaton M.P."/>
            <person name="Clawson M.L."/>
            <person name="Snelling W.M."/>
            <person name="Wiedmann R.T."/>
            <person name="Van Tassell C.P."/>
            <person name="Smith T.P.L."/>
        </authorList>
    </citation>
    <scope>NUCLEOTIDE SEQUENCE [LARGE SCALE MRNA] (ISOFORM 2)</scope>
</reference>
<reference key="2">
    <citation type="submission" date="2005-08" db="EMBL/GenBank/DDBJ databases">
        <authorList>
            <consortium name="NIH - Mammalian Gene Collection (MGC) project"/>
        </authorList>
    </citation>
    <scope>NUCLEOTIDE SEQUENCE [LARGE SCALE MRNA] (ISOFORM 1)</scope>
    <source>
        <strain>Hereford</strain>
        <tissue>Uterus</tissue>
    </source>
</reference>
<proteinExistence type="evidence at transcript level"/>
<gene>
    <name type="primary">UNC50</name>
</gene>
<keyword id="KW-0007">Acetylation</keyword>
<keyword id="KW-0025">Alternative splicing</keyword>
<keyword id="KW-0333">Golgi apparatus</keyword>
<keyword id="KW-0472">Membrane</keyword>
<keyword id="KW-0539">Nucleus</keyword>
<keyword id="KW-0597">Phosphoprotein</keyword>
<keyword id="KW-1185">Reference proteome</keyword>
<keyword id="KW-0694">RNA-binding</keyword>
<keyword id="KW-0812">Transmembrane</keyword>
<keyword id="KW-1133">Transmembrane helix</keyword>
<protein>
    <recommendedName>
        <fullName>Protein unc-50 homolog</fullName>
    </recommendedName>
</protein>
<accession>Q3ZBG6</accession>
<accession>Q5E989</accession>
<organism>
    <name type="scientific">Bos taurus</name>
    <name type="common">Bovine</name>
    <dbReference type="NCBI Taxonomy" id="9913"/>
    <lineage>
        <taxon>Eukaryota</taxon>
        <taxon>Metazoa</taxon>
        <taxon>Chordata</taxon>
        <taxon>Craniata</taxon>
        <taxon>Vertebrata</taxon>
        <taxon>Euteleostomi</taxon>
        <taxon>Mammalia</taxon>
        <taxon>Eutheria</taxon>
        <taxon>Laurasiatheria</taxon>
        <taxon>Artiodactyla</taxon>
        <taxon>Ruminantia</taxon>
        <taxon>Pecora</taxon>
        <taxon>Bovidae</taxon>
        <taxon>Bovinae</taxon>
        <taxon>Bos</taxon>
    </lineage>
</organism>
<feature type="chain" id="PRO_0000308960" description="Protein unc-50 homolog">
    <location>
        <begin position="1"/>
        <end position="259"/>
    </location>
</feature>
<feature type="topological domain" description="Cytoplasmic" evidence="3">
    <location>
        <begin position="1"/>
        <end position="82"/>
    </location>
</feature>
<feature type="transmembrane region" description="Helical" evidence="3">
    <location>
        <begin position="83"/>
        <end position="103"/>
    </location>
</feature>
<feature type="topological domain" description="Lumenal" evidence="3">
    <location>
        <begin position="104"/>
        <end position="115"/>
    </location>
</feature>
<feature type="transmembrane region" description="Helical" evidence="3">
    <location>
        <begin position="116"/>
        <end position="136"/>
    </location>
</feature>
<feature type="topological domain" description="Cytoplasmic" evidence="3">
    <location>
        <begin position="137"/>
        <end position="163"/>
    </location>
</feature>
<feature type="transmembrane region" description="Helical" evidence="3">
    <location>
        <begin position="164"/>
        <end position="184"/>
    </location>
</feature>
<feature type="topological domain" description="Lumenal" evidence="3">
    <location>
        <begin position="185"/>
        <end position="187"/>
    </location>
</feature>
<feature type="transmembrane region" description="Helical" evidence="3">
    <location>
        <begin position="188"/>
        <end position="208"/>
    </location>
</feature>
<feature type="topological domain" description="Cytoplasmic" evidence="3">
    <location>
        <begin position="209"/>
        <end position="222"/>
    </location>
</feature>
<feature type="transmembrane region" description="Helical" evidence="3">
    <location>
        <begin position="223"/>
        <end position="243"/>
    </location>
</feature>
<feature type="topological domain" description="Lumenal" evidence="3">
    <location>
        <begin position="244"/>
        <end position="259"/>
    </location>
</feature>
<feature type="region of interest" description="Disordered" evidence="4">
    <location>
        <begin position="1"/>
        <end position="22"/>
    </location>
</feature>
<feature type="compositionally biased region" description="Polar residues" evidence="4">
    <location>
        <begin position="1"/>
        <end position="17"/>
    </location>
</feature>
<feature type="modified residue" description="N-acetylmethionine" evidence="2">
    <location>
        <position position="1"/>
    </location>
</feature>
<feature type="modified residue" description="Phosphoserine" evidence="2">
    <location>
        <position position="6"/>
    </location>
</feature>
<feature type="splice variant" id="VSP_029085" description="In isoform 2." evidence="5">
    <original>NH</original>
    <variation>NPD</variation>
    <location>
        <begin position="180"/>
        <end position="181"/>
    </location>
</feature>
<sequence>MLPSTSVNSPAQGNGVLSSRDAARHTAGAKRYKYLRRLFRFRQMDFEFAAWQMLYLFTSPQRVYRNFHYRKQTKDQWARDDPAFLVLLSIWLCVSTIGFGFVLDMGFFETIKLLLWVVFIDCVGVGLLISTLMWFISNKYLVKRQSRDYDVEWGYAFDVHLNAFYPLLVILHFIQLFFINHVILTDTFIGYLVGNTLWLVAVGYYIYVTFLGYSALPFLKNTVILLYPFAPLILLYGLSLALGWNFTHTLCSFYKYRVK</sequence>
<comment type="function">
    <text evidence="1">Involved in the cell surface expression of neuronal nicotinic receptors (By similarity). Binds RNA (By similarity).</text>
</comment>
<comment type="subcellular location">
    <subcellularLocation>
        <location evidence="1">Nucleus inner membrane</location>
        <topology evidence="1">Multi-pass membrane protein</topology>
    </subcellularLocation>
    <subcellularLocation>
        <location evidence="2">Golgi apparatus membrane</location>
        <topology evidence="2">Multi-pass membrane protein</topology>
    </subcellularLocation>
</comment>
<comment type="alternative products">
    <event type="alternative splicing"/>
    <isoform>
        <id>Q3ZBG6-1</id>
        <name>1</name>
        <sequence type="displayed"/>
    </isoform>
    <isoform>
        <id>Q3ZBG6-2</id>
        <name>2</name>
        <sequence type="described" ref="VSP_029085"/>
    </isoform>
</comment>
<comment type="similarity">
    <text evidence="6">Belongs to the unc-50 family.</text>
</comment>